<protein>
    <recommendedName>
        <fullName evidence="1">Peptidyl-tRNA hydrolase</fullName>
        <shortName evidence="1">Pth</shortName>
        <ecNumber evidence="1">3.1.1.29</ecNumber>
    </recommendedName>
</protein>
<reference key="1">
    <citation type="submission" date="2009-03" db="EMBL/GenBank/DDBJ databases">
        <title>Comparison of the complete genome sequences of Rhodococcus erythropolis PR4 and Rhodococcus opacus B4.</title>
        <authorList>
            <person name="Takarada H."/>
            <person name="Sekine M."/>
            <person name="Hosoyama A."/>
            <person name="Yamada R."/>
            <person name="Fujisawa T."/>
            <person name="Omata S."/>
            <person name="Shimizu A."/>
            <person name="Tsukatani N."/>
            <person name="Tanikawa S."/>
            <person name="Fujita N."/>
            <person name="Harayama S."/>
        </authorList>
    </citation>
    <scope>NUCLEOTIDE SEQUENCE [LARGE SCALE GENOMIC DNA]</scope>
    <source>
        <strain>B4</strain>
    </source>
</reference>
<sequence>MSEDTALVVGLGNPGPQYEKTRHNVGFMVAGVLSARMGGKFSAHKKSGAEIVQGRLEGRPTILAKPRSFMNLSGSAVAGLARFFSVDPGNIVVIHDELDLDFGTIRLKQGGGEGGHNGLRSISQSLGTKDYLRTRVGIGRPPGRMDPASYVLKPFSSVERKELDLVCEESADAVELVLRLGLEAAQNRLH</sequence>
<name>PTH_RHOOB</name>
<organism>
    <name type="scientific">Rhodococcus opacus (strain B4)</name>
    <dbReference type="NCBI Taxonomy" id="632772"/>
    <lineage>
        <taxon>Bacteria</taxon>
        <taxon>Bacillati</taxon>
        <taxon>Actinomycetota</taxon>
        <taxon>Actinomycetes</taxon>
        <taxon>Mycobacteriales</taxon>
        <taxon>Nocardiaceae</taxon>
        <taxon>Rhodococcus</taxon>
    </lineage>
</organism>
<keyword id="KW-0963">Cytoplasm</keyword>
<keyword id="KW-0378">Hydrolase</keyword>
<keyword id="KW-0694">RNA-binding</keyword>
<keyword id="KW-0820">tRNA-binding</keyword>
<comment type="function">
    <text evidence="1">Hydrolyzes ribosome-free peptidyl-tRNAs (with 1 or more amino acids incorporated), which drop off the ribosome during protein synthesis, or as a result of ribosome stalling.</text>
</comment>
<comment type="function">
    <text evidence="1">Catalyzes the release of premature peptidyl moieties from peptidyl-tRNA molecules trapped in stalled 50S ribosomal subunits, and thus maintains levels of free tRNAs and 50S ribosomes.</text>
</comment>
<comment type="catalytic activity">
    <reaction evidence="1">
        <text>an N-acyl-L-alpha-aminoacyl-tRNA + H2O = an N-acyl-L-amino acid + a tRNA + H(+)</text>
        <dbReference type="Rhea" id="RHEA:54448"/>
        <dbReference type="Rhea" id="RHEA-COMP:10123"/>
        <dbReference type="Rhea" id="RHEA-COMP:13883"/>
        <dbReference type="ChEBI" id="CHEBI:15377"/>
        <dbReference type="ChEBI" id="CHEBI:15378"/>
        <dbReference type="ChEBI" id="CHEBI:59874"/>
        <dbReference type="ChEBI" id="CHEBI:78442"/>
        <dbReference type="ChEBI" id="CHEBI:138191"/>
        <dbReference type="EC" id="3.1.1.29"/>
    </reaction>
</comment>
<comment type="subunit">
    <text evidence="1">Monomer.</text>
</comment>
<comment type="subcellular location">
    <subcellularLocation>
        <location evidence="1">Cytoplasm</location>
    </subcellularLocation>
</comment>
<comment type="similarity">
    <text evidence="1">Belongs to the PTH family.</text>
</comment>
<dbReference type="EC" id="3.1.1.29" evidence="1"/>
<dbReference type="EMBL" id="AP011115">
    <property type="protein sequence ID" value="BAH54010.1"/>
    <property type="molecule type" value="Genomic_DNA"/>
</dbReference>
<dbReference type="RefSeq" id="WP_015889504.1">
    <property type="nucleotide sequence ID" value="NC_012522.1"/>
</dbReference>
<dbReference type="SMR" id="C1AY15"/>
<dbReference type="STRING" id="632772.ROP_57630"/>
<dbReference type="KEGG" id="rop:ROP_57630"/>
<dbReference type="PATRIC" id="fig|632772.20.peg.6018"/>
<dbReference type="HOGENOM" id="CLU_062456_2_2_11"/>
<dbReference type="OrthoDB" id="9800507at2"/>
<dbReference type="Proteomes" id="UP000002212">
    <property type="component" value="Chromosome"/>
</dbReference>
<dbReference type="GO" id="GO:0005737">
    <property type="term" value="C:cytoplasm"/>
    <property type="evidence" value="ECO:0007669"/>
    <property type="project" value="UniProtKB-SubCell"/>
</dbReference>
<dbReference type="GO" id="GO:0004045">
    <property type="term" value="F:peptidyl-tRNA hydrolase activity"/>
    <property type="evidence" value="ECO:0007669"/>
    <property type="project" value="UniProtKB-UniRule"/>
</dbReference>
<dbReference type="GO" id="GO:0000049">
    <property type="term" value="F:tRNA binding"/>
    <property type="evidence" value="ECO:0007669"/>
    <property type="project" value="UniProtKB-UniRule"/>
</dbReference>
<dbReference type="GO" id="GO:0006515">
    <property type="term" value="P:protein quality control for misfolded or incompletely synthesized proteins"/>
    <property type="evidence" value="ECO:0007669"/>
    <property type="project" value="UniProtKB-UniRule"/>
</dbReference>
<dbReference type="GO" id="GO:0072344">
    <property type="term" value="P:rescue of stalled ribosome"/>
    <property type="evidence" value="ECO:0007669"/>
    <property type="project" value="UniProtKB-UniRule"/>
</dbReference>
<dbReference type="CDD" id="cd00462">
    <property type="entry name" value="PTH"/>
    <property type="match status" value="1"/>
</dbReference>
<dbReference type="FunFam" id="3.40.50.1470:FF:000001">
    <property type="entry name" value="Peptidyl-tRNA hydrolase"/>
    <property type="match status" value="1"/>
</dbReference>
<dbReference type="Gene3D" id="3.40.50.1470">
    <property type="entry name" value="Peptidyl-tRNA hydrolase"/>
    <property type="match status" value="1"/>
</dbReference>
<dbReference type="HAMAP" id="MF_00083">
    <property type="entry name" value="Pept_tRNA_hydro_bact"/>
    <property type="match status" value="1"/>
</dbReference>
<dbReference type="InterPro" id="IPR001328">
    <property type="entry name" value="Pept_tRNA_hydro"/>
</dbReference>
<dbReference type="InterPro" id="IPR018171">
    <property type="entry name" value="Pept_tRNA_hydro_CS"/>
</dbReference>
<dbReference type="InterPro" id="IPR036416">
    <property type="entry name" value="Pept_tRNA_hydro_sf"/>
</dbReference>
<dbReference type="NCBIfam" id="TIGR00447">
    <property type="entry name" value="pth"/>
    <property type="match status" value="1"/>
</dbReference>
<dbReference type="PANTHER" id="PTHR17224">
    <property type="entry name" value="PEPTIDYL-TRNA HYDROLASE"/>
    <property type="match status" value="1"/>
</dbReference>
<dbReference type="PANTHER" id="PTHR17224:SF1">
    <property type="entry name" value="PEPTIDYL-TRNA HYDROLASE"/>
    <property type="match status" value="1"/>
</dbReference>
<dbReference type="Pfam" id="PF01195">
    <property type="entry name" value="Pept_tRNA_hydro"/>
    <property type="match status" value="1"/>
</dbReference>
<dbReference type="SUPFAM" id="SSF53178">
    <property type="entry name" value="Peptidyl-tRNA hydrolase-like"/>
    <property type="match status" value="1"/>
</dbReference>
<dbReference type="PROSITE" id="PS01196">
    <property type="entry name" value="PEPT_TRNA_HYDROL_2"/>
    <property type="match status" value="1"/>
</dbReference>
<gene>
    <name evidence="1" type="primary">pth</name>
    <name type="ordered locus">ROP_57630</name>
</gene>
<evidence type="ECO:0000255" key="1">
    <source>
        <dbReference type="HAMAP-Rule" id="MF_00083"/>
    </source>
</evidence>
<accession>C1AY15</accession>
<proteinExistence type="inferred from homology"/>
<feature type="chain" id="PRO_1000118405" description="Peptidyl-tRNA hydrolase">
    <location>
        <begin position="1"/>
        <end position="190"/>
    </location>
</feature>
<feature type="active site" description="Proton acceptor" evidence="1">
    <location>
        <position position="23"/>
    </location>
</feature>
<feature type="binding site" evidence="1">
    <location>
        <position position="18"/>
    </location>
    <ligand>
        <name>tRNA</name>
        <dbReference type="ChEBI" id="CHEBI:17843"/>
    </ligand>
</feature>
<feature type="binding site" evidence="1">
    <location>
        <position position="69"/>
    </location>
    <ligand>
        <name>tRNA</name>
        <dbReference type="ChEBI" id="CHEBI:17843"/>
    </ligand>
</feature>
<feature type="binding site" evidence="1">
    <location>
        <position position="71"/>
    </location>
    <ligand>
        <name>tRNA</name>
        <dbReference type="ChEBI" id="CHEBI:17843"/>
    </ligand>
</feature>
<feature type="binding site" evidence="1">
    <location>
        <position position="117"/>
    </location>
    <ligand>
        <name>tRNA</name>
        <dbReference type="ChEBI" id="CHEBI:17843"/>
    </ligand>
</feature>
<feature type="site" description="Discriminates between blocked and unblocked aminoacyl-tRNA" evidence="1">
    <location>
        <position position="13"/>
    </location>
</feature>
<feature type="site" description="Stabilizes the basic form of H active site to accept a proton" evidence="1">
    <location>
        <position position="96"/>
    </location>
</feature>